<gene>
    <name type="ordered locus">At5g07830</name>
    <name type="ORF">F13G24.30</name>
</gene>
<feature type="signal peptide" evidence="2">
    <location>
        <begin position="1"/>
        <end position="24"/>
    </location>
</feature>
<feature type="chain" id="PRO_0000042269" description="Heparanase-like protein 1">
    <location>
        <begin position="25"/>
        <end position="543"/>
    </location>
</feature>
<feature type="active site" description="Proton donor" evidence="2">
    <location>
        <position position="201"/>
    </location>
</feature>
<feature type="active site" description="Nucleophile" evidence="2">
    <location>
        <position position="320"/>
    </location>
</feature>
<feature type="glycosylation site" description="N-linked (GlcNAc...) asparagine" evidence="2">
    <location>
        <position position="184"/>
    </location>
</feature>
<feature type="glycosylation site" description="N-linked (GlcNAc...) asparagine" evidence="2">
    <location>
        <position position="304"/>
    </location>
</feature>
<feature type="glycosylation site" description="N-linked (GlcNAc...) asparagine" evidence="2">
    <location>
        <position position="425"/>
    </location>
</feature>
<feature type="glycosylation site" description="N-linked (GlcNAc...) asparagine" evidence="2">
    <location>
        <position position="428"/>
    </location>
</feature>
<proteinExistence type="evidence at transcript level"/>
<accession>Q9FF10</accession>
<accession>Q9SDA1</accession>
<name>HPSE1_ARATH</name>
<dbReference type="EC" id="3.2.-.-"/>
<dbReference type="EMBL" id="AB005249">
    <property type="protein sequence ID" value="BAB09947.1"/>
    <property type="molecule type" value="Genomic_DNA"/>
</dbReference>
<dbReference type="EMBL" id="AL133421">
    <property type="protein sequence ID" value="CAB62595.1"/>
    <property type="status" value="ALT_INIT"/>
    <property type="molecule type" value="Genomic_DNA"/>
</dbReference>
<dbReference type="EMBL" id="CP002688">
    <property type="protein sequence ID" value="AED91209.1"/>
    <property type="molecule type" value="Genomic_DNA"/>
</dbReference>
<dbReference type="EMBL" id="BT015345">
    <property type="protein sequence ID" value="AAU05468.1"/>
    <property type="molecule type" value="mRNA"/>
</dbReference>
<dbReference type="EMBL" id="BT015800">
    <property type="protein sequence ID" value="AAU93572.1"/>
    <property type="molecule type" value="mRNA"/>
</dbReference>
<dbReference type="PIR" id="T45608">
    <property type="entry name" value="T45608"/>
</dbReference>
<dbReference type="RefSeq" id="NP_196400.2">
    <property type="nucleotide sequence ID" value="NM_120865.5"/>
</dbReference>
<dbReference type="SMR" id="Q9FF10"/>
<dbReference type="BioGRID" id="15954">
    <property type="interactions" value="1"/>
</dbReference>
<dbReference type="FunCoup" id="Q9FF10">
    <property type="interactions" value="296"/>
</dbReference>
<dbReference type="STRING" id="3702.Q9FF10"/>
<dbReference type="CAZy" id="GH79">
    <property type="family name" value="Glycoside Hydrolase Family 79"/>
</dbReference>
<dbReference type="GlyGen" id="Q9FF10">
    <property type="glycosylation" value="4 sites"/>
</dbReference>
<dbReference type="iPTMnet" id="Q9FF10"/>
<dbReference type="PaxDb" id="3702-AT5G07830.1"/>
<dbReference type="ProteomicsDB" id="230268"/>
<dbReference type="EnsemblPlants" id="AT5G07830.1">
    <property type="protein sequence ID" value="AT5G07830.1"/>
    <property type="gene ID" value="AT5G07830"/>
</dbReference>
<dbReference type="GeneID" id="830676"/>
<dbReference type="Gramene" id="AT5G07830.1">
    <property type="protein sequence ID" value="AT5G07830.1"/>
    <property type="gene ID" value="AT5G07830"/>
</dbReference>
<dbReference type="KEGG" id="ath:AT5G07830"/>
<dbReference type="Araport" id="AT5G07830"/>
<dbReference type="TAIR" id="AT5G07830">
    <property type="gene designation" value="GUS2"/>
</dbReference>
<dbReference type="eggNOG" id="ENOG502QQST">
    <property type="taxonomic scope" value="Eukaryota"/>
</dbReference>
<dbReference type="HOGENOM" id="CLU_021823_3_0_1"/>
<dbReference type="InParanoid" id="Q9FF10"/>
<dbReference type="OMA" id="YMRGSIT"/>
<dbReference type="OrthoDB" id="726732at2759"/>
<dbReference type="PhylomeDB" id="Q9FF10"/>
<dbReference type="BioCyc" id="ARA:AT5G07830-MONOMER"/>
<dbReference type="PRO" id="PR:Q9FF10"/>
<dbReference type="Proteomes" id="UP000006548">
    <property type="component" value="Chromosome 5"/>
</dbReference>
<dbReference type="ExpressionAtlas" id="Q9FF10">
    <property type="expression patterns" value="baseline and differential"/>
</dbReference>
<dbReference type="GO" id="GO:0005576">
    <property type="term" value="C:extracellular region"/>
    <property type="evidence" value="ECO:0007669"/>
    <property type="project" value="UniProtKB-SubCell"/>
</dbReference>
<dbReference type="GO" id="GO:0005765">
    <property type="term" value="C:lysosomal membrane"/>
    <property type="evidence" value="ECO:0007669"/>
    <property type="project" value="UniProtKB-SubCell"/>
</dbReference>
<dbReference type="GO" id="GO:0009505">
    <property type="term" value="C:plant-type cell wall"/>
    <property type="evidence" value="ECO:0007005"/>
    <property type="project" value="TAIR"/>
</dbReference>
<dbReference type="GO" id="GO:0005886">
    <property type="term" value="C:plasma membrane"/>
    <property type="evidence" value="ECO:0007005"/>
    <property type="project" value="TAIR"/>
</dbReference>
<dbReference type="GO" id="GO:0004566">
    <property type="term" value="F:beta-glucuronidase activity"/>
    <property type="evidence" value="ECO:0000314"/>
    <property type="project" value="TAIR"/>
</dbReference>
<dbReference type="GO" id="GO:0009826">
    <property type="term" value="P:unidimensional cell growth"/>
    <property type="evidence" value="ECO:0000315"/>
    <property type="project" value="TAIR"/>
</dbReference>
<dbReference type="FunFam" id="3.20.20.80:FF:000023">
    <property type="entry name" value="heparanase-like protein 3"/>
    <property type="match status" value="1"/>
</dbReference>
<dbReference type="Gene3D" id="3.20.20.80">
    <property type="entry name" value="Glycosidases"/>
    <property type="match status" value="1"/>
</dbReference>
<dbReference type="InterPro" id="IPR005199">
    <property type="entry name" value="Glyco_hydro_79"/>
</dbReference>
<dbReference type="InterPro" id="IPR017853">
    <property type="entry name" value="Glycoside_hydrolase_SF"/>
</dbReference>
<dbReference type="PANTHER" id="PTHR14363:SF21">
    <property type="entry name" value="HEPARANASE-LIKE PROTEIN 1"/>
    <property type="match status" value="1"/>
</dbReference>
<dbReference type="PANTHER" id="PTHR14363">
    <property type="entry name" value="HEPARANASE-RELATED"/>
    <property type="match status" value="1"/>
</dbReference>
<dbReference type="Pfam" id="PF03662">
    <property type="entry name" value="Glyco_hydro_79n"/>
    <property type="match status" value="1"/>
</dbReference>
<dbReference type="SUPFAM" id="SSF51445">
    <property type="entry name" value="(Trans)glycosidases"/>
    <property type="match status" value="1"/>
</dbReference>
<sequence>MGFRVCVIVVFLGCLLLVPEKTMAQEMKRASIVIQGARRVCETDENFVCATLDWWPHDKCNYDQCPWGYSSVINMDLTRPLLTKAIKAFKPLRIRIGGSLQDQVIYDVGNLKTPCRPFQKMNSGLFGFSKGCLHMKRWDELNSFLTATGAVVTFGLNALRGRHKLRGKAWGGAWDHINTQDFLNYTVSKGYVIDSWEFGNELSGSGVGASVSAELYGKDLIVLKDVINKVYKNSWLHKPILVAPGGFYEQQWYTKLLEISGPSVVDVVTHHIYNLGSGNDPALVKKIMDPSYLSQVSKTFKDVNQTIQEHGPWASPWVGESGGAYNSGGRHVSDTFIDSFWYLDQLGMSARHNTKVYCRQTLVGGFYGLLEKGTFVPNPDYYSALLWHRLMGKGVLAVQTDGPPQLRVYAHCSKGRAGVTLLLINLSNQSDFTVSVSNGINVVLNAESRKKKSLLDTLKRPFSWIGSKASDGYLNREEYHLTPENGVLRSKTMVLNGKSLKPTATGDIPSLEPVLRSVNSPLNVLPLSMSFIVLPNFDASACS</sequence>
<reference key="1">
    <citation type="journal article" date="1997" name="DNA Res.">
        <title>Structural analysis of Arabidopsis thaliana chromosome 5. I. Sequence features of the 1.6 Mb regions covered by twenty physically assigned P1 clones.</title>
        <authorList>
            <person name="Sato S."/>
            <person name="Kotani H."/>
            <person name="Nakamura Y."/>
            <person name="Kaneko T."/>
            <person name="Asamizu E."/>
            <person name="Fukami M."/>
            <person name="Miyajima N."/>
            <person name="Tabata S."/>
        </authorList>
    </citation>
    <scope>NUCLEOTIDE SEQUENCE [LARGE SCALE GENOMIC DNA]</scope>
    <source>
        <strain>cv. Columbia</strain>
    </source>
</reference>
<reference key="2">
    <citation type="journal article" date="2000" name="Nature">
        <title>Sequence and analysis of chromosome 5 of the plant Arabidopsis thaliana.</title>
        <authorList>
            <person name="Tabata S."/>
            <person name="Kaneko T."/>
            <person name="Nakamura Y."/>
            <person name="Kotani H."/>
            <person name="Kato T."/>
            <person name="Asamizu E."/>
            <person name="Miyajima N."/>
            <person name="Sasamoto S."/>
            <person name="Kimura T."/>
            <person name="Hosouchi T."/>
            <person name="Kawashima K."/>
            <person name="Kohara M."/>
            <person name="Matsumoto M."/>
            <person name="Matsuno A."/>
            <person name="Muraki A."/>
            <person name="Nakayama S."/>
            <person name="Nakazaki N."/>
            <person name="Naruo K."/>
            <person name="Okumura S."/>
            <person name="Shinpo S."/>
            <person name="Takeuchi C."/>
            <person name="Wada T."/>
            <person name="Watanabe A."/>
            <person name="Yamada M."/>
            <person name="Yasuda M."/>
            <person name="Sato S."/>
            <person name="de la Bastide M."/>
            <person name="Huang E."/>
            <person name="Spiegel L."/>
            <person name="Gnoj L."/>
            <person name="O'Shaughnessy A."/>
            <person name="Preston R."/>
            <person name="Habermann K."/>
            <person name="Murray J."/>
            <person name="Johnson D."/>
            <person name="Rohlfing T."/>
            <person name="Nelson J."/>
            <person name="Stoneking T."/>
            <person name="Pepin K."/>
            <person name="Spieth J."/>
            <person name="Sekhon M."/>
            <person name="Armstrong J."/>
            <person name="Becker M."/>
            <person name="Belter E."/>
            <person name="Cordum H."/>
            <person name="Cordes M."/>
            <person name="Courtney L."/>
            <person name="Courtney W."/>
            <person name="Dante M."/>
            <person name="Du H."/>
            <person name="Edwards J."/>
            <person name="Fryman J."/>
            <person name="Haakensen B."/>
            <person name="Lamar E."/>
            <person name="Latreille P."/>
            <person name="Leonard S."/>
            <person name="Meyer R."/>
            <person name="Mulvaney E."/>
            <person name="Ozersky P."/>
            <person name="Riley A."/>
            <person name="Strowmatt C."/>
            <person name="Wagner-McPherson C."/>
            <person name="Wollam A."/>
            <person name="Yoakum M."/>
            <person name="Bell M."/>
            <person name="Dedhia N."/>
            <person name="Parnell L."/>
            <person name="Shah R."/>
            <person name="Rodriguez M."/>
            <person name="Hoon See L."/>
            <person name="Vil D."/>
            <person name="Baker J."/>
            <person name="Kirchoff K."/>
            <person name="Toth K."/>
            <person name="King L."/>
            <person name="Bahret A."/>
            <person name="Miller B."/>
            <person name="Marra M.A."/>
            <person name="Martienssen R."/>
            <person name="McCombie W.R."/>
            <person name="Wilson R.K."/>
            <person name="Murphy G."/>
            <person name="Bancroft I."/>
            <person name="Volckaert G."/>
            <person name="Wambutt R."/>
            <person name="Duesterhoeft A."/>
            <person name="Stiekema W."/>
            <person name="Pohl T."/>
            <person name="Entian K.-D."/>
            <person name="Terryn N."/>
            <person name="Hartley N."/>
            <person name="Bent E."/>
            <person name="Johnson S."/>
            <person name="Langham S.-A."/>
            <person name="McCullagh B."/>
            <person name="Robben J."/>
            <person name="Grymonprez B."/>
            <person name="Zimmermann W."/>
            <person name="Ramsperger U."/>
            <person name="Wedler H."/>
            <person name="Balke K."/>
            <person name="Wedler E."/>
            <person name="Peters S."/>
            <person name="van Staveren M."/>
            <person name="Dirkse W."/>
            <person name="Mooijman P."/>
            <person name="Klein Lankhorst R."/>
            <person name="Weitzenegger T."/>
            <person name="Bothe G."/>
            <person name="Rose M."/>
            <person name="Hauf J."/>
            <person name="Berneiser S."/>
            <person name="Hempel S."/>
            <person name="Feldpausch M."/>
            <person name="Lamberth S."/>
            <person name="Villarroel R."/>
            <person name="Gielen J."/>
            <person name="Ardiles W."/>
            <person name="Bents O."/>
            <person name="Lemcke K."/>
            <person name="Kolesov G."/>
            <person name="Mayer K.F.X."/>
            <person name="Rudd S."/>
            <person name="Schoof H."/>
            <person name="Schueller C."/>
            <person name="Zaccaria P."/>
            <person name="Mewes H.-W."/>
            <person name="Bevan M."/>
            <person name="Fransz P.F."/>
        </authorList>
    </citation>
    <scope>NUCLEOTIDE SEQUENCE [LARGE SCALE GENOMIC DNA]</scope>
    <source>
        <strain>cv. Columbia</strain>
    </source>
</reference>
<reference key="3">
    <citation type="journal article" date="2017" name="Plant J.">
        <title>Araport11: a complete reannotation of the Arabidopsis thaliana reference genome.</title>
        <authorList>
            <person name="Cheng C.Y."/>
            <person name="Krishnakumar V."/>
            <person name="Chan A.P."/>
            <person name="Thibaud-Nissen F."/>
            <person name="Schobel S."/>
            <person name="Town C.D."/>
        </authorList>
    </citation>
    <scope>GENOME REANNOTATION</scope>
    <source>
        <strain>cv. Columbia</strain>
    </source>
</reference>
<reference key="4">
    <citation type="submission" date="2004-10" db="EMBL/GenBank/DDBJ databases">
        <title>Arabidopsis ORF clones.</title>
        <authorList>
            <person name="Kim C.J."/>
            <person name="Chen H."/>
            <person name="Cheuk R.F."/>
            <person name="Shinn P."/>
            <person name="Ecker J.R."/>
        </authorList>
    </citation>
    <scope>NUCLEOTIDE SEQUENCE [LARGE SCALE MRNA]</scope>
    <source>
        <strain>cv. Columbia</strain>
    </source>
</reference>
<organism>
    <name type="scientific">Arabidopsis thaliana</name>
    <name type="common">Mouse-ear cress</name>
    <dbReference type="NCBI Taxonomy" id="3702"/>
    <lineage>
        <taxon>Eukaryota</taxon>
        <taxon>Viridiplantae</taxon>
        <taxon>Streptophyta</taxon>
        <taxon>Embryophyta</taxon>
        <taxon>Tracheophyta</taxon>
        <taxon>Spermatophyta</taxon>
        <taxon>Magnoliopsida</taxon>
        <taxon>eudicotyledons</taxon>
        <taxon>Gunneridae</taxon>
        <taxon>Pentapetalae</taxon>
        <taxon>rosids</taxon>
        <taxon>malvids</taxon>
        <taxon>Brassicales</taxon>
        <taxon>Brassicaceae</taxon>
        <taxon>Camelineae</taxon>
        <taxon>Arabidopsis</taxon>
    </lineage>
</organism>
<protein>
    <recommendedName>
        <fullName>Heparanase-like protein 1</fullName>
        <ecNumber>3.2.-.-</ecNumber>
    </recommendedName>
</protein>
<evidence type="ECO:0000250" key="1"/>
<evidence type="ECO:0000255" key="2"/>
<evidence type="ECO:0000305" key="3"/>
<comment type="function">
    <text evidence="1">Endoglycosidase which is a cell surface and extracellular matrix-degrading enzyme. Cleaves heparan sulfate proteoglycans (HSPGs) into heparan sulfate side chains and core proteoglycans (By similarity).</text>
</comment>
<comment type="subcellular location">
    <subcellularLocation>
        <location evidence="1">Lysosome membrane</location>
        <topology evidence="1">Peripheral membrane protein</topology>
    </subcellularLocation>
    <subcellularLocation>
        <location evidence="1">Secreted</location>
    </subcellularLocation>
</comment>
<comment type="similarity">
    <text evidence="3">Belongs to the glycosyl hydrolase 79 family.</text>
</comment>
<comment type="sequence caution" evidence="3">
    <conflict type="erroneous initiation">
        <sequence resource="EMBL-CDS" id="CAB62595"/>
    </conflict>
</comment>
<keyword id="KW-0325">Glycoprotein</keyword>
<keyword id="KW-0378">Hydrolase</keyword>
<keyword id="KW-0458">Lysosome</keyword>
<keyword id="KW-0472">Membrane</keyword>
<keyword id="KW-1185">Reference proteome</keyword>
<keyword id="KW-0964">Secreted</keyword>
<keyword id="KW-0732">Signal</keyword>